<evidence type="ECO:0000305" key="1"/>
<dbReference type="EMBL" id="CU329670">
    <property type="protein sequence ID" value="CAA93343.1"/>
    <property type="molecule type" value="Genomic_DNA"/>
</dbReference>
<dbReference type="PIR" id="T38884">
    <property type="entry name" value="T38884"/>
</dbReference>
<dbReference type="RefSeq" id="NP_594340.1">
    <property type="nucleotide sequence ID" value="NM_001019761.2"/>
</dbReference>
<dbReference type="SMR" id="Q10212"/>
<dbReference type="BioGRID" id="280068">
    <property type="interactions" value="2"/>
</dbReference>
<dbReference type="FunCoup" id="Q10212">
    <property type="interactions" value="253"/>
</dbReference>
<dbReference type="STRING" id="284812.Q10212"/>
<dbReference type="PaxDb" id="4896-SPAC4H3.04c.1"/>
<dbReference type="EnsemblFungi" id="SPAC4H3.04c.1">
    <property type="protein sequence ID" value="SPAC4H3.04c.1:pep"/>
    <property type="gene ID" value="SPAC4H3.04c"/>
</dbReference>
<dbReference type="KEGG" id="spo:2543654"/>
<dbReference type="PomBase" id="SPAC4H3.04c"/>
<dbReference type="VEuPathDB" id="FungiDB:SPAC4H3.04c"/>
<dbReference type="eggNOG" id="KOG3086">
    <property type="taxonomic scope" value="Eukaryota"/>
</dbReference>
<dbReference type="HOGENOM" id="CLU_038085_0_1_1"/>
<dbReference type="InParanoid" id="Q10212"/>
<dbReference type="OMA" id="MHLPYIH"/>
<dbReference type="PhylomeDB" id="Q10212"/>
<dbReference type="PRO" id="PR:Q10212"/>
<dbReference type="Proteomes" id="UP000002485">
    <property type="component" value="Chromosome I"/>
</dbReference>
<dbReference type="GO" id="GO:0005829">
    <property type="term" value="C:cytosol"/>
    <property type="evidence" value="ECO:0007005"/>
    <property type="project" value="PomBase"/>
</dbReference>
<dbReference type="GO" id="GO:0005634">
    <property type="term" value="C:nucleus"/>
    <property type="evidence" value="ECO:0007005"/>
    <property type="project" value="PomBase"/>
</dbReference>
<dbReference type="CDD" id="cd07361">
    <property type="entry name" value="MEMO_like"/>
    <property type="match status" value="1"/>
</dbReference>
<dbReference type="Gene3D" id="3.40.830.10">
    <property type="entry name" value="LigB-like"/>
    <property type="match status" value="1"/>
</dbReference>
<dbReference type="HAMAP" id="MF_00055">
    <property type="entry name" value="MEMO1"/>
    <property type="match status" value="1"/>
</dbReference>
<dbReference type="InterPro" id="IPR002737">
    <property type="entry name" value="MEMO1_fam"/>
</dbReference>
<dbReference type="NCBIfam" id="TIGR04336">
    <property type="entry name" value="AmmeMemoSam_B"/>
    <property type="match status" value="1"/>
</dbReference>
<dbReference type="PANTHER" id="PTHR11060">
    <property type="entry name" value="PROTEIN MEMO1"/>
    <property type="match status" value="1"/>
</dbReference>
<dbReference type="PANTHER" id="PTHR11060:SF0">
    <property type="entry name" value="PROTEIN MEMO1"/>
    <property type="match status" value="1"/>
</dbReference>
<dbReference type="Pfam" id="PF01875">
    <property type="entry name" value="Memo"/>
    <property type="match status" value="1"/>
</dbReference>
<proteinExistence type="inferred from homology"/>
<comment type="similarity">
    <text evidence="1">Belongs to the MEMO1 family.</text>
</comment>
<gene>
    <name type="ORF">SPAC4H3.04c</name>
</gene>
<protein>
    <recommendedName>
        <fullName>MEMO1 family protein C4H3.04c</fullName>
    </recommendedName>
</protein>
<reference key="1">
    <citation type="journal article" date="2002" name="Nature">
        <title>The genome sequence of Schizosaccharomyces pombe.</title>
        <authorList>
            <person name="Wood V."/>
            <person name="Gwilliam R."/>
            <person name="Rajandream M.A."/>
            <person name="Lyne M.H."/>
            <person name="Lyne R."/>
            <person name="Stewart A."/>
            <person name="Sgouros J.G."/>
            <person name="Peat N."/>
            <person name="Hayles J."/>
            <person name="Baker S.G."/>
            <person name="Basham D."/>
            <person name="Bowman S."/>
            <person name="Brooks K."/>
            <person name="Brown D."/>
            <person name="Brown S."/>
            <person name="Chillingworth T."/>
            <person name="Churcher C.M."/>
            <person name="Collins M."/>
            <person name="Connor R."/>
            <person name="Cronin A."/>
            <person name="Davis P."/>
            <person name="Feltwell T."/>
            <person name="Fraser A."/>
            <person name="Gentles S."/>
            <person name="Goble A."/>
            <person name="Hamlin N."/>
            <person name="Harris D.E."/>
            <person name="Hidalgo J."/>
            <person name="Hodgson G."/>
            <person name="Holroyd S."/>
            <person name="Hornsby T."/>
            <person name="Howarth S."/>
            <person name="Huckle E.J."/>
            <person name="Hunt S."/>
            <person name="Jagels K."/>
            <person name="James K.D."/>
            <person name="Jones L."/>
            <person name="Jones M."/>
            <person name="Leather S."/>
            <person name="McDonald S."/>
            <person name="McLean J."/>
            <person name="Mooney P."/>
            <person name="Moule S."/>
            <person name="Mungall K.L."/>
            <person name="Murphy L.D."/>
            <person name="Niblett D."/>
            <person name="Odell C."/>
            <person name="Oliver K."/>
            <person name="O'Neil S."/>
            <person name="Pearson D."/>
            <person name="Quail M.A."/>
            <person name="Rabbinowitsch E."/>
            <person name="Rutherford K.M."/>
            <person name="Rutter S."/>
            <person name="Saunders D."/>
            <person name="Seeger K."/>
            <person name="Sharp S."/>
            <person name="Skelton J."/>
            <person name="Simmonds M.N."/>
            <person name="Squares R."/>
            <person name="Squares S."/>
            <person name="Stevens K."/>
            <person name="Taylor K."/>
            <person name="Taylor R.G."/>
            <person name="Tivey A."/>
            <person name="Walsh S.V."/>
            <person name="Warren T."/>
            <person name="Whitehead S."/>
            <person name="Woodward J.R."/>
            <person name="Volckaert G."/>
            <person name="Aert R."/>
            <person name="Robben J."/>
            <person name="Grymonprez B."/>
            <person name="Weltjens I."/>
            <person name="Vanstreels E."/>
            <person name="Rieger M."/>
            <person name="Schaefer M."/>
            <person name="Mueller-Auer S."/>
            <person name="Gabel C."/>
            <person name="Fuchs M."/>
            <person name="Duesterhoeft A."/>
            <person name="Fritzc C."/>
            <person name="Holzer E."/>
            <person name="Moestl D."/>
            <person name="Hilbert H."/>
            <person name="Borzym K."/>
            <person name="Langer I."/>
            <person name="Beck A."/>
            <person name="Lehrach H."/>
            <person name="Reinhardt R."/>
            <person name="Pohl T.M."/>
            <person name="Eger P."/>
            <person name="Zimmermann W."/>
            <person name="Wedler H."/>
            <person name="Wambutt R."/>
            <person name="Purnelle B."/>
            <person name="Goffeau A."/>
            <person name="Cadieu E."/>
            <person name="Dreano S."/>
            <person name="Gloux S."/>
            <person name="Lelaure V."/>
            <person name="Mottier S."/>
            <person name="Galibert F."/>
            <person name="Aves S.J."/>
            <person name="Xiang Z."/>
            <person name="Hunt C."/>
            <person name="Moore K."/>
            <person name="Hurst S.M."/>
            <person name="Lucas M."/>
            <person name="Rochet M."/>
            <person name="Gaillardin C."/>
            <person name="Tallada V.A."/>
            <person name="Garzon A."/>
            <person name="Thode G."/>
            <person name="Daga R.R."/>
            <person name="Cruzado L."/>
            <person name="Jimenez J."/>
            <person name="Sanchez M."/>
            <person name="del Rey F."/>
            <person name="Benito J."/>
            <person name="Dominguez A."/>
            <person name="Revuelta J.L."/>
            <person name="Moreno S."/>
            <person name="Armstrong J."/>
            <person name="Forsburg S.L."/>
            <person name="Cerutti L."/>
            <person name="Lowe T."/>
            <person name="McCombie W.R."/>
            <person name="Paulsen I."/>
            <person name="Potashkin J."/>
            <person name="Shpakovski G.V."/>
            <person name="Ussery D."/>
            <person name="Barrell B.G."/>
            <person name="Nurse P."/>
        </authorList>
    </citation>
    <scope>NUCLEOTIDE SEQUENCE [LARGE SCALE GENOMIC DNA]</scope>
    <source>
        <strain>972 / ATCC 24843</strain>
    </source>
</reference>
<accession>Q10212</accession>
<keyword id="KW-1185">Reference proteome</keyword>
<name>YAY4_SCHPO</name>
<sequence length="309" mass="34747">MSQAIREATHAGSWYLDDTELLTKQLKSFIKNPTPETGKRFVISPHAGYMYSGKVASQGFQQLDFSKIQRVFVFGPSHHIFTRKCLVSRASICSTPLGDLKVDEDLCQKLVASDNSFDSMTLDVDESEHSLEMQFPLLAFHLLKQGCLGKVKIVPIMIGALTSTTMMAAAKFLSQYIKDESNSFVISSDFCHWGRRFGYTLYLNDTNQLEDAVLKYKRRGGPTSPKIYESISNLDHIGMKIIETKSSDDFSEYLKTTQNTICGRYPIELIMKSMECANFSERFKFISYAQSSHVELVTDSSVSYATATA</sequence>
<organism>
    <name type="scientific">Schizosaccharomyces pombe (strain 972 / ATCC 24843)</name>
    <name type="common">Fission yeast</name>
    <dbReference type="NCBI Taxonomy" id="284812"/>
    <lineage>
        <taxon>Eukaryota</taxon>
        <taxon>Fungi</taxon>
        <taxon>Dikarya</taxon>
        <taxon>Ascomycota</taxon>
        <taxon>Taphrinomycotina</taxon>
        <taxon>Schizosaccharomycetes</taxon>
        <taxon>Schizosaccharomycetales</taxon>
        <taxon>Schizosaccharomycetaceae</taxon>
        <taxon>Schizosaccharomyces</taxon>
    </lineage>
</organism>
<feature type="chain" id="PRO_0000134397" description="MEMO1 family protein C4H3.04c">
    <location>
        <begin position="1"/>
        <end position="309"/>
    </location>
</feature>